<comment type="function">
    <text>Binds to sialic acid-containing receptors on the cell surface, bringing about the attachment of the virus particle to the cell. This attachment induces virion internalization of about two third of the virus particles through clathrin-dependent endocytosis and about one third through a clathrin- and caveolin-independent pathway. Plays a major role in the determination of host range restriction and virulence. Class I viral fusion protein. Responsible for penetration of the virus into the cell cytoplasm by mediating the fusion of the membrane of the endocytosed virus particle with the endosomal membrane. Low pH in endosomes induces an irreversible conformational change in HA2, releasing the fusion hydrophobic peptide. Several trimers are required to form a competent fusion pore.</text>
</comment>
<comment type="subunit">
    <text>Homotrimer of disulfide-linked HA1-HA2.</text>
</comment>
<comment type="subcellular location">
    <subcellularLocation>
        <location evidence="3">Virion membrane</location>
        <topology evidence="3">Single-pass type I membrane protein</topology>
    </subcellularLocation>
    <subcellularLocation>
        <location>Host apical cell membrane</location>
        <topology>Single-pass type I membrane protein</topology>
    </subcellularLocation>
    <text>Targeted to the apical plasma membrane in epithelial polarized cells through a signal present in the transmembrane domain. Associated with glycosphingolipid- and cholesterol-enriched detergent-resistant lipid rafts.</text>
</comment>
<comment type="PTM">
    <text evidence="1">In natural infection, inactive HA is matured into HA1 and HA2 outside the cell by one or more trypsin-like, arginine-specific endoprotease secreted by the bronchial epithelial cells. One identified protease that may be involved in this process is secreted in lungs by club cells (By similarity).</text>
</comment>
<comment type="PTM">
    <text evidence="1">Palmitoylated.</text>
</comment>
<comment type="miscellaneous">
    <text>Major glycoprotein, comprises over 80% of the envelope proteins present in virus particle.</text>
</comment>
<comment type="miscellaneous">
    <text>The extent of infection into host organism is determined by HA. Influenza viruses bud from the apical surface of polarized epithelial cells (e.g. bronchial epithelial cells) into lumen of lungs and are therefore usually pneumotropic. The reason is that HA is cleaved by tryptase clara which is restricted to lungs. However, HAs of H5 and H7 pantropic avian viruses subtypes can be cleaved by furin and subtilisin-type enzymes, allowing the virus to grow in other organs than lungs.</text>
</comment>
<comment type="miscellaneous">
    <text>The influenza A genome consist of 8 RNA segments. Genetic variation of hemagglutinin and/or neuraminidase genes results in the emergence of new influenza strains. The mechanism of variation can be the result of point mutations or the result of genetic reassortment between segments of two different strains.</text>
</comment>
<comment type="similarity">
    <text evidence="3">Belongs to the influenza viruses hemagglutinin family.</text>
</comment>
<sequence>CIGYHANNSTDTVDTVLEKNVTVTHSVNLLEDSHNGKLCRLKGIAPLQLGKCSIAGWILGNPECESLVSKKSWSYIAETPNSENGTCYPGYFADYEELREQLSSVSSFERFEIFPKERSWPK</sequence>
<organism>
    <name type="scientific">Influenza A virus (strain A/Camel/Mongolia/1982 H1N1)</name>
    <dbReference type="NCBI Taxonomy" id="387191"/>
    <lineage>
        <taxon>Viruses</taxon>
        <taxon>Riboviria</taxon>
        <taxon>Orthornavirae</taxon>
        <taxon>Negarnaviricota</taxon>
        <taxon>Polyploviricotina</taxon>
        <taxon>Insthoviricetes</taxon>
        <taxon>Articulavirales</taxon>
        <taxon>Orthomyxoviridae</taxon>
        <taxon>Alphainfluenzavirus</taxon>
        <taxon>Alphainfluenzavirus influenzae</taxon>
        <taxon>Influenza A virus</taxon>
    </lineage>
</organism>
<keyword id="KW-1167">Clathrin- and caveolin-independent endocytosis of virus by host</keyword>
<keyword id="KW-1165">Clathrin-mediated endocytosis of virus by host</keyword>
<keyword id="KW-1015">Disulfide bond</keyword>
<keyword id="KW-1170">Fusion of virus membrane with host endosomal membrane</keyword>
<keyword id="KW-1168">Fusion of virus membrane with host membrane</keyword>
<keyword id="KW-0325">Glycoprotein</keyword>
<keyword id="KW-0348">Hemagglutinin</keyword>
<keyword id="KW-1032">Host cell membrane</keyword>
<keyword id="KW-1043">Host membrane</keyword>
<keyword id="KW-0945">Host-virus interaction</keyword>
<keyword id="KW-0449">Lipoprotein</keyword>
<keyword id="KW-0472">Membrane</keyword>
<keyword id="KW-0564">Palmitate</keyword>
<keyword id="KW-0812">Transmembrane</keyword>
<keyword id="KW-1161">Viral attachment to host cell</keyword>
<keyword id="KW-0261">Viral envelope protein</keyword>
<keyword id="KW-1162">Viral penetration into host cytoplasm</keyword>
<keyword id="KW-0946">Virion</keyword>
<keyword id="KW-1164">Virus endocytosis by host</keyword>
<keyword id="KW-1160">Virus entry into host cell</keyword>
<evidence type="ECO:0000250" key="1"/>
<evidence type="ECO:0000255" key="2"/>
<evidence type="ECO:0000305" key="3"/>
<gene>
    <name type="primary">HA</name>
</gene>
<feature type="chain" id="PRO_0000078675" description="Hemagglutinin">
    <location>
        <begin position="1" status="less than"/>
        <end position="122" status="greater than"/>
    </location>
</feature>
<feature type="glycosylation site" description="N-linked (GlcNAc...) asparagine; by host" evidence="2">
    <location>
        <position position="7"/>
    </location>
</feature>
<feature type="glycosylation site" description="N-linked (GlcNAc...) asparagine; by host" evidence="2">
    <location>
        <position position="8"/>
    </location>
</feature>
<feature type="glycosylation site" description="N-linked (GlcNAc...) asparagine; by host" evidence="2">
    <location>
        <position position="20"/>
    </location>
</feature>
<feature type="glycosylation site" description="N-linked (GlcNAc...) asparagine; by host" evidence="2">
    <location>
        <position position="84"/>
    </location>
</feature>
<feature type="non-terminal residue">
    <location>
        <position position="1"/>
    </location>
</feature>
<feature type="non-terminal residue">
    <location>
        <position position="122"/>
    </location>
</feature>
<proteinExistence type="evidence at transcript level"/>
<reference key="1">
    <citation type="journal article" date="1993" name="Virology">
        <title>A reassortant H1N1 influenza A virus caused fatal epizootics among camels in Mongolia.</title>
        <authorList>
            <person name="Yamnikova S.S."/>
            <person name="Mandler J."/>
            <person name="Bekh-Ochir Z.H."/>
            <person name="Dachtzeren P."/>
            <person name="Ludwig S."/>
            <person name="Lvov D.K."/>
            <person name="Scholtissek C."/>
        </authorList>
    </citation>
    <scope>NUCLEOTIDE SEQUENCE [MRNA]</scope>
</reference>
<organismHost>
    <name type="scientific">Aves</name>
    <dbReference type="NCBI Taxonomy" id="8782"/>
</organismHost>
<organismHost>
    <name type="scientific">Homo sapiens</name>
    <name type="common">Human</name>
    <dbReference type="NCBI Taxonomy" id="9606"/>
</organismHost>
<organismHost>
    <name type="scientific">Sus scrofa</name>
    <name type="common">Pig</name>
    <dbReference type="NCBI Taxonomy" id="9823"/>
</organismHost>
<name>HEMA_I82A2</name>
<accession>P26142</accession>
<protein>
    <recommendedName>
        <fullName>Hemagglutinin</fullName>
    </recommendedName>
</protein>
<dbReference type="EMBL" id="M73975">
    <property type="protein sequence ID" value="AAA16905.1"/>
    <property type="molecule type" value="mRNA"/>
</dbReference>
<dbReference type="SMR" id="P26142"/>
<dbReference type="GlyCosmos" id="P26142">
    <property type="glycosylation" value="4 sites, No reported glycans"/>
</dbReference>
<dbReference type="GO" id="GO:0020002">
    <property type="term" value="C:host cell plasma membrane"/>
    <property type="evidence" value="ECO:0007669"/>
    <property type="project" value="UniProtKB-SubCell"/>
</dbReference>
<dbReference type="GO" id="GO:0016020">
    <property type="term" value="C:membrane"/>
    <property type="evidence" value="ECO:0007669"/>
    <property type="project" value="UniProtKB-KW"/>
</dbReference>
<dbReference type="GO" id="GO:0019031">
    <property type="term" value="C:viral envelope"/>
    <property type="evidence" value="ECO:0007669"/>
    <property type="project" value="UniProtKB-KW"/>
</dbReference>
<dbReference type="GO" id="GO:0055036">
    <property type="term" value="C:virion membrane"/>
    <property type="evidence" value="ECO:0007669"/>
    <property type="project" value="UniProtKB-SubCell"/>
</dbReference>
<dbReference type="GO" id="GO:0046789">
    <property type="term" value="F:host cell surface receptor binding"/>
    <property type="evidence" value="ECO:0007669"/>
    <property type="project" value="InterPro"/>
</dbReference>
<dbReference type="GO" id="GO:0075512">
    <property type="term" value="P:clathrin-dependent endocytosis of virus by host cell"/>
    <property type="evidence" value="ECO:0007669"/>
    <property type="project" value="UniProtKB-KW"/>
</dbReference>
<dbReference type="GO" id="GO:0039654">
    <property type="term" value="P:fusion of virus membrane with host endosome membrane"/>
    <property type="evidence" value="ECO:0007669"/>
    <property type="project" value="UniProtKB-KW"/>
</dbReference>
<dbReference type="GO" id="GO:0019064">
    <property type="term" value="P:fusion of virus membrane with host plasma membrane"/>
    <property type="evidence" value="ECO:0007669"/>
    <property type="project" value="InterPro"/>
</dbReference>
<dbReference type="GO" id="GO:0019062">
    <property type="term" value="P:virion attachment to host cell"/>
    <property type="evidence" value="ECO:0007669"/>
    <property type="project" value="UniProtKB-KW"/>
</dbReference>
<dbReference type="Gene3D" id="3.90.209.20">
    <property type="match status" value="1"/>
</dbReference>
<dbReference type="Gene3D" id="2.10.77.10">
    <property type="entry name" value="Hemagglutinin Chain A, Domain 2"/>
    <property type="match status" value="1"/>
</dbReference>
<dbReference type="InterPro" id="IPR008980">
    <property type="entry name" value="Capsid_hemagglutn"/>
</dbReference>
<dbReference type="InterPro" id="IPR013828">
    <property type="entry name" value="Hemagglutn_HA1_a/b_dom_sf"/>
</dbReference>
<dbReference type="InterPro" id="IPR000149">
    <property type="entry name" value="Hemagglutn_influenz_A"/>
</dbReference>
<dbReference type="InterPro" id="IPR001364">
    <property type="entry name" value="Hemagglutn_influenz_A/B"/>
</dbReference>
<dbReference type="Pfam" id="PF00509">
    <property type="entry name" value="Hemagglutinin"/>
    <property type="match status" value="1"/>
</dbReference>
<dbReference type="PRINTS" id="PR00330">
    <property type="entry name" value="HEMAGGLUTN1"/>
</dbReference>
<dbReference type="SUPFAM" id="SSF49818">
    <property type="entry name" value="Viral protein domain"/>
    <property type="match status" value="1"/>
</dbReference>